<proteinExistence type="inferred from homology"/>
<protein>
    <recommendedName>
        <fullName evidence="1">RNA-binding protein Hfq</fullName>
    </recommendedName>
</protein>
<organism>
    <name type="scientific">Pectobacterium carotovorum subsp. carotovorum (strain PC1)</name>
    <dbReference type="NCBI Taxonomy" id="561230"/>
    <lineage>
        <taxon>Bacteria</taxon>
        <taxon>Pseudomonadati</taxon>
        <taxon>Pseudomonadota</taxon>
        <taxon>Gammaproteobacteria</taxon>
        <taxon>Enterobacterales</taxon>
        <taxon>Pectobacteriaceae</taxon>
        <taxon>Pectobacterium</taxon>
    </lineage>
</organism>
<gene>
    <name evidence="1" type="primary">hfq</name>
    <name type="ordered locus">PC1_3721</name>
</gene>
<dbReference type="EMBL" id="CP001657">
    <property type="protein sequence ID" value="ACT14736.1"/>
    <property type="molecule type" value="Genomic_DNA"/>
</dbReference>
<dbReference type="RefSeq" id="WP_015841848.1">
    <property type="nucleotide sequence ID" value="NC_012917.1"/>
</dbReference>
<dbReference type="SMR" id="C6DFJ7"/>
<dbReference type="STRING" id="561230.PC1_3721"/>
<dbReference type="GeneID" id="67792469"/>
<dbReference type="KEGG" id="pct:PC1_3721"/>
<dbReference type="eggNOG" id="COG1923">
    <property type="taxonomic scope" value="Bacteria"/>
</dbReference>
<dbReference type="HOGENOM" id="CLU_113688_2_1_6"/>
<dbReference type="OrthoDB" id="9799751at2"/>
<dbReference type="Proteomes" id="UP000002736">
    <property type="component" value="Chromosome"/>
</dbReference>
<dbReference type="GO" id="GO:0005829">
    <property type="term" value="C:cytosol"/>
    <property type="evidence" value="ECO:0007669"/>
    <property type="project" value="TreeGrafter"/>
</dbReference>
<dbReference type="GO" id="GO:0003723">
    <property type="term" value="F:RNA binding"/>
    <property type="evidence" value="ECO:0007669"/>
    <property type="project" value="UniProtKB-UniRule"/>
</dbReference>
<dbReference type="GO" id="GO:0006355">
    <property type="term" value="P:regulation of DNA-templated transcription"/>
    <property type="evidence" value="ECO:0007669"/>
    <property type="project" value="InterPro"/>
</dbReference>
<dbReference type="GO" id="GO:0043487">
    <property type="term" value="P:regulation of RNA stability"/>
    <property type="evidence" value="ECO:0007669"/>
    <property type="project" value="TreeGrafter"/>
</dbReference>
<dbReference type="GO" id="GO:0045974">
    <property type="term" value="P:regulation of translation, ncRNA-mediated"/>
    <property type="evidence" value="ECO:0007669"/>
    <property type="project" value="TreeGrafter"/>
</dbReference>
<dbReference type="CDD" id="cd01716">
    <property type="entry name" value="Hfq"/>
    <property type="match status" value="1"/>
</dbReference>
<dbReference type="FunFam" id="2.30.30.100:FF:000001">
    <property type="entry name" value="RNA-binding protein Hfq"/>
    <property type="match status" value="1"/>
</dbReference>
<dbReference type="Gene3D" id="2.30.30.100">
    <property type="match status" value="1"/>
</dbReference>
<dbReference type="HAMAP" id="MF_00436">
    <property type="entry name" value="Hfq"/>
    <property type="match status" value="1"/>
</dbReference>
<dbReference type="InterPro" id="IPR005001">
    <property type="entry name" value="Hfq"/>
</dbReference>
<dbReference type="InterPro" id="IPR010920">
    <property type="entry name" value="LSM_dom_sf"/>
</dbReference>
<dbReference type="InterPro" id="IPR047575">
    <property type="entry name" value="Sm"/>
</dbReference>
<dbReference type="NCBIfam" id="TIGR02383">
    <property type="entry name" value="Hfq"/>
    <property type="match status" value="1"/>
</dbReference>
<dbReference type="NCBIfam" id="NF001602">
    <property type="entry name" value="PRK00395.1"/>
    <property type="match status" value="1"/>
</dbReference>
<dbReference type="PANTHER" id="PTHR34772">
    <property type="entry name" value="RNA-BINDING PROTEIN HFQ"/>
    <property type="match status" value="1"/>
</dbReference>
<dbReference type="PANTHER" id="PTHR34772:SF1">
    <property type="entry name" value="RNA-BINDING PROTEIN HFQ"/>
    <property type="match status" value="1"/>
</dbReference>
<dbReference type="Pfam" id="PF17209">
    <property type="entry name" value="Hfq"/>
    <property type="match status" value="1"/>
</dbReference>
<dbReference type="SUPFAM" id="SSF50182">
    <property type="entry name" value="Sm-like ribonucleoproteins"/>
    <property type="match status" value="1"/>
</dbReference>
<dbReference type="PROSITE" id="PS52002">
    <property type="entry name" value="SM"/>
    <property type="match status" value="1"/>
</dbReference>
<accession>C6DFJ7</accession>
<comment type="function">
    <text evidence="1">RNA chaperone that binds small regulatory RNA (sRNAs) and mRNAs to facilitate mRNA translational regulation in response to envelope stress, environmental stress and changes in metabolite concentrations. Also binds with high specificity to tRNAs.</text>
</comment>
<comment type="subunit">
    <text evidence="1">Homohexamer.</text>
</comment>
<comment type="similarity">
    <text evidence="1">Belongs to the Hfq family.</text>
</comment>
<evidence type="ECO:0000255" key="1">
    <source>
        <dbReference type="HAMAP-Rule" id="MF_00436"/>
    </source>
</evidence>
<evidence type="ECO:0000255" key="2">
    <source>
        <dbReference type="PROSITE-ProRule" id="PRU01346"/>
    </source>
</evidence>
<evidence type="ECO:0000256" key="3">
    <source>
        <dbReference type="SAM" id="MobiDB-lite"/>
    </source>
</evidence>
<reference key="1">
    <citation type="submission" date="2009-07" db="EMBL/GenBank/DDBJ databases">
        <title>Complete sequence of Pectobacterium carotovorum subsp. carotovorum PC1.</title>
        <authorList>
            <consortium name="US DOE Joint Genome Institute"/>
            <person name="Lucas S."/>
            <person name="Copeland A."/>
            <person name="Lapidus A."/>
            <person name="Glavina del Rio T."/>
            <person name="Tice H."/>
            <person name="Bruce D."/>
            <person name="Goodwin L."/>
            <person name="Pitluck S."/>
            <person name="Munk A.C."/>
            <person name="Brettin T."/>
            <person name="Detter J.C."/>
            <person name="Han C."/>
            <person name="Tapia R."/>
            <person name="Larimer F."/>
            <person name="Land M."/>
            <person name="Hauser L."/>
            <person name="Kyrpides N."/>
            <person name="Mikhailova N."/>
            <person name="Balakrishnan V."/>
            <person name="Glasner J."/>
            <person name="Perna N.T."/>
        </authorList>
    </citation>
    <scope>NUCLEOTIDE SEQUENCE [LARGE SCALE GENOMIC DNA]</scope>
    <source>
        <strain>PC1</strain>
    </source>
</reference>
<keyword id="KW-0694">RNA-binding</keyword>
<keyword id="KW-0346">Stress response</keyword>
<name>HFQ_PECCP</name>
<sequence>MAKGQSLQDPFLNALRRERVPVSIYLVNGIKLQGQIESFDQFVILLKNTVSQMVYKHAISTVVPSRPVSHHSNNPGGGSNYHGNNTAASQQSQEADDAE</sequence>
<feature type="chain" id="PRO_1000206103" description="RNA-binding protein Hfq">
    <location>
        <begin position="1"/>
        <end position="99"/>
    </location>
</feature>
<feature type="domain" description="Sm" evidence="2">
    <location>
        <begin position="9"/>
        <end position="68"/>
    </location>
</feature>
<feature type="region of interest" description="Disordered" evidence="3">
    <location>
        <begin position="64"/>
        <end position="99"/>
    </location>
</feature>